<sequence length="297" mass="32158">MNNYISGATTAIITPFKNGTLDEATYANLIQRQIDNNIDAICPVGTTGESATLSHDEHKRCIEIAVEVCKGSNAKVLAGAGSNATHEAIDIAKHAEACGVDALFSVSPYYNKPSQEGLYQHYKAIASAVEVPFMLYNVPGRTGVDILPDTVKRLFDDVWNIMGIKEATGSIERTVELLAKVPDLYVFSGDDSIDFPILASGGKGITSVTANLLPDMKADLTHAALRGDFKTSKAINDELFEINKVLFCESNPIPIKAAMYIAGLIDTLEYRLPLVPPSSENMKKIENVMKKYKIVGA</sequence>
<dbReference type="EC" id="4.3.3.7" evidence="1"/>
<dbReference type="EMBL" id="AP009179">
    <property type="protein sequence ID" value="BAF71767.1"/>
    <property type="molecule type" value="Genomic_DNA"/>
</dbReference>
<dbReference type="RefSeq" id="WP_011980500.1">
    <property type="nucleotide sequence ID" value="NC_009663.1"/>
</dbReference>
<dbReference type="SMR" id="A6Q8F8"/>
<dbReference type="STRING" id="387093.SUN_0809"/>
<dbReference type="KEGG" id="sun:SUN_0809"/>
<dbReference type="eggNOG" id="COG0329">
    <property type="taxonomic scope" value="Bacteria"/>
</dbReference>
<dbReference type="HOGENOM" id="CLU_049343_7_0_7"/>
<dbReference type="OrthoDB" id="9782828at2"/>
<dbReference type="UniPathway" id="UPA00034">
    <property type="reaction ID" value="UER00017"/>
</dbReference>
<dbReference type="Proteomes" id="UP000006378">
    <property type="component" value="Chromosome"/>
</dbReference>
<dbReference type="GO" id="GO:0005829">
    <property type="term" value="C:cytosol"/>
    <property type="evidence" value="ECO:0007669"/>
    <property type="project" value="TreeGrafter"/>
</dbReference>
<dbReference type="GO" id="GO:0008840">
    <property type="term" value="F:4-hydroxy-tetrahydrodipicolinate synthase activity"/>
    <property type="evidence" value="ECO:0007669"/>
    <property type="project" value="UniProtKB-UniRule"/>
</dbReference>
<dbReference type="GO" id="GO:0019877">
    <property type="term" value="P:diaminopimelate biosynthetic process"/>
    <property type="evidence" value="ECO:0007669"/>
    <property type="project" value="UniProtKB-UniRule"/>
</dbReference>
<dbReference type="GO" id="GO:0009089">
    <property type="term" value="P:lysine biosynthetic process via diaminopimelate"/>
    <property type="evidence" value="ECO:0007669"/>
    <property type="project" value="UniProtKB-UniRule"/>
</dbReference>
<dbReference type="CDD" id="cd00950">
    <property type="entry name" value="DHDPS"/>
    <property type="match status" value="1"/>
</dbReference>
<dbReference type="Gene3D" id="3.20.20.70">
    <property type="entry name" value="Aldolase class I"/>
    <property type="match status" value="1"/>
</dbReference>
<dbReference type="HAMAP" id="MF_00418">
    <property type="entry name" value="DapA"/>
    <property type="match status" value="1"/>
</dbReference>
<dbReference type="InterPro" id="IPR013785">
    <property type="entry name" value="Aldolase_TIM"/>
</dbReference>
<dbReference type="InterPro" id="IPR005263">
    <property type="entry name" value="DapA"/>
</dbReference>
<dbReference type="InterPro" id="IPR002220">
    <property type="entry name" value="DapA-like"/>
</dbReference>
<dbReference type="InterPro" id="IPR020625">
    <property type="entry name" value="Schiff_base-form_aldolases_AS"/>
</dbReference>
<dbReference type="NCBIfam" id="TIGR00674">
    <property type="entry name" value="dapA"/>
    <property type="match status" value="1"/>
</dbReference>
<dbReference type="PANTHER" id="PTHR12128:SF66">
    <property type="entry name" value="4-HYDROXY-2-OXOGLUTARATE ALDOLASE, MITOCHONDRIAL"/>
    <property type="match status" value="1"/>
</dbReference>
<dbReference type="PANTHER" id="PTHR12128">
    <property type="entry name" value="DIHYDRODIPICOLINATE SYNTHASE"/>
    <property type="match status" value="1"/>
</dbReference>
<dbReference type="Pfam" id="PF00701">
    <property type="entry name" value="DHDPS"/>
    <property type="match status" value="1"/>
</dbReference>
<dbReference type="PIRSF" id="PIRSF001365">
    <property type="entry name" value="DHDPS"/>
    <property type="match status" value="1"/>
</dbReference>
<dbReference type="PRINTS" id="PR00146">
    <property type="entry name" value="DHPICSNTHASE"/>
</dbReference>
<dbReference type="SMART" id="SM01130">
    <property type="entry name" value="DHDPS"/>
    <property type="match status" value="1"/>
</dbReference>
<dbReference type="SUPFAM" id="SSF51569">
    <property type="entry name" value="Aldolase"/>
    <property type="match status" value="1"/>
</dbReference>
<dbReference type="PROSITE" id="PS00666">
    <property type="entry name" value="DHDPS_2"/>
    <property type="match status" value="1"/>
</dbReference>
<evidence type="ECO:0000255" key="1">
    <source>
        <dbReference type="HAMAP-Rule" id="MF_00418"/>
    </source>
</evidence>
<evidence type="ECO:0000305" key="2"/>
<protein>
    <recommendedName>
        <fullName evidence="1">4-hydroxy-tetrahydrodipicolinate synthase</fullName>
        <shortName evidence="1">HTPA synthase</shortName>
        <ecNumber evidence="1">4.3.3.7</ecNumber>
    </recommendedName>
</protein>
<reference key="1">
    <citation type="journal article" date="2007" name="Proc. Natl. Acad. Sci. U.S.A.">
        <title>Deep-sea vent epsilon-proteobacterial genomes provide insights into emergence of pathogens.</title>
        <authorList>
            <person name="Nakagawa S."/>
            <person name="Takaki Y."/>
            <person name="Shimamura S."/>
            <person name="Reysenbach A.-L."/>
            <person name="Takai K."/>
            <person name="Horikoshi K."/>
        </authorList>
    </citation>
    <scope>NUCLEOTIDE SEQUENCE [LARGE SCALE GENOMIC DNA]</scope>
    <source>
        <strain>NBC37-1</strain>
    </source>
</reference>
<gene>
    <name evidence="1" type="primary">dapA</name>
    <name type="ordered locus">SUN_0809</name>
</gene>
<organism>
    <name type="scientific">Sulfurovum sp. (strain NBC37-1)</name>
    <dbReference type="NCBI Taxonomy" id="387093"/>
    <lineage>
        <taxon>Bacteria</taxon>
        <taxon>Pseudomonadati</taxon>
        <taxon>Campylobacterota</taxon>
        <taxon>Epsilonproteobacteria</taxon>
        <taxon>Campylobacterales</taxon>
        <taxon>Sulfurovaceae</taxon>
        <taxon>Sulfurovum</taxon>
    </lineage>
</organism>
<proteinExistence type="inferred from homology"/>
<feature type="chain" id="PRO_0000340990" description="4-hydroxy-tetrahydrodipicolinate synthase">
    <location>
        <begin position="1"/>
        <end position="297"/>
    </location>
</feature>
<feature type="active site" description="Proton donor/acceptor" evidence="1">
    <location>
        <position position="136"/>
    </location>
</feature>
<feature type="active site" description="Schiff-base intermediate with substrate" evidence="1">
    <location>
        <position position="165"/>
    </location>
</feature>
<feature type="binding site" evidence="1">
    <location>
        <position position="47"/>
    </location>
    <ligand>
        <name>pyruvate</name>
        <dbReference type="ChEBI" id="CHEBI:15361"/>
    </ligand>
</feature>
<feature type="binding site" evidence="1">
    <location>
        <position position="206"/>
    </location>
    <ligand>
        <name>pyruvate</name>
        <dbReference type="ChEBI" id="CHEBI:15361"/>
    </ligand>
</feature>
<feature type="site" description="Part of a proton relay during catalysis" evidence="1">
    <location>
        <position position="46"/>
    </location>
</feature>
<feature type="site" description="Part of a proton relay during catalysis" evidence="1">
    <location>
        <position position="110"/>
    </location>
</feature>
<comment type="function">
    <text evidence="1">Catalyzes the condensation of (S)-aspartate-beta-semialdehyde [(S)-ASA] and pyruvate to 4-hydroxy-tetrahydrodipicolinate (HTPA).</text>
</comment>
<comment type="catalytic activity">
    <reaction evidence="1">
        <text>L-aspartate 4-semialdehyde + pyruvate = (2S,4S)-4-hydroxy-2,3,4,5-tetrahydrodipicolinate + H2O + H(+)</text>
        <dbReference type="Rhea" id="RHEA:34171"/>
        <dbReference type="ChEBI" id="CHEBI:15361"/>
        <dbReference type="ChEBI" id="CHEBI:15377"/>
        <dbReference type="ChEBI" id="CHEBI:15378"/>
        <dbReference type="ChEBI" id="CHEBI:67139"/>
        <dbReference type="ChEBI" id="CHEBI:537519"/>
        <dbReference type="EC" id="4.3.3.7"/>
    </reaction>
</comment>
<comment type="pathway">
    <text evidence="1">Amino-acid biosynthesis; L-lysine biosynthesis via DAP pathway; (S)-tetrahydrodipicolinate from L-aspartate: step 3/4.</text>
</comment>
<comment type="subunit">
    <text evidence="1">Homotetramer; dimer of dimers.</text>
</comment>
<comment type="subcellular location">
    <subcellularLocation>
        <location evidence="1">Cytoplasm</location>
    </subcellularLocation>
</comment>
<comment type="similarity">
    <text evidence="1">Belongs to the DapA family.</text>
</comment>
<comment type="caution">
    <text evidence="2">Was originally thought to be a dihydrodipicolinate synthase (DHDPS), catalyzing the condensation of (S)-aspartate-beta-semialdehyde [(S)-ASA] and pyruvate to dihydrodipicolinate (DHDP). However, it was shown in E.coli that the product of the enzymatic reaction is not dihydrodipicolinate but in fact (4S)-4-hydroxy-2,3,4,5-tetrahydro-(2S)-dipicolinic acid (HTPA), and that the consecutive dehydration reaction leading to DHDP is not spontaneous but catalyzed by DapB.</text>
</comment>
<keyword id="KW-0028">Amino-acid biosynthesis</keyword>
<keyword id="KW-0963">Cytoplasm</keyword>
<keyword id="KW-0220">Diaminopimelate biosynthesis</keyword>
<keyword id="KW-0456">Lyase</keyword>
<keyword id="KW-0457">Lysine biosynthesis</keyword>
<keyword id="KW-0704">Schiff base</keyword>
<name>DAPA_SULNB</name>
<accession>A6Q8F8</accession>